<organismHost>
    <name type="scientific">Chlorocebus aethiops</name>
    <name type="common">Green monkey</name>
    <name type="synonym">Cercopithecus aethiops</name>
    <dbReference type="NCBI Taxonomy" id="9534"/>
</organismHost>
<organismHost>
    <name type="scientific">Homo sapiens</name>
    <name type="common">Human</name>
    <dbReference type="NCBI Taxonomy" id="9606"/>
</organismHost>
<accession>P27402</accession>
<keyword id="KW-0010">Activator</keyword>
<keyword id="KW-0025">Alternative splicing</keyword>
<keyword id="KW-0238">DNA-binding</keyword>
<keyword id="KW-1048">Host nucleus</keyword>
<keyword id="KW-1185">Reference proteome</keyword>
<keyword id="KW-0804">Transcription</keyword>
<keyword id="KW-0805">Transcription regulation</keyword>
<evidence type="ECO:0000250" key="1"/>
<evidence type="ECO:0000255" key="2"/>
<evidence type="ECO:0000256" key="3">
    <source>
        <dbReference type="SAM" id="MobiDB-lite"/>
    </source>
</evidence>
<evidence type="ECO:0000305" key="4"/>
<sequence>MASWEKEKELAHLHQPEDDPLPDLSLLLDMDQFEPTEGPDSNPGAEKIYLQLQVAPGDPSEKTYKFGYEDKEAQNPDLKMRNWVPDPEKMSKWACARLILCGLYNAKKAKELLKMDYDIHWEQSKEDSQYFEIEYHCKMCMTVIHEPMPVSYDKKTGLWIKMGPLRGDIGSVVHTCRRHYERCMSALPSSGEPLKPRVRANPVRRYREKSLIVADRPKRSRWGVAPREQPNTSSGDAMALMPGPCGPFNMDPPGCLLERVPGSEPGTSEMALAMSGGPFWEQVYRDSISGPPTGPSEN</sequence>
<gene>
    <name type="primary">bel1</name>
    <name type="synonym">taf</name>
    <name type="synonym">tas</name>
</gene>
<name>BEL1_SFV3L</name>
<protein>
    <recommendedName>
        <fullName>Protein Bel-1</fullName>
    </recommendedName>
    <alternativeName>
        <fullName>Transactivator of spumavirus</fullName>
        <shortName>Tas</shortName>
    </alternativeName>
    <alternativeName>
        <fullName>Transcriptional transactivator</fullName>
    </alternativeName>
</protein>
<proteinExistence type="inferred from homology"/>
<reference key="1">
    <citation type="journal article" date="1992" name="Virology">
        <title>Genomic organization and expression of simian foamy virus type 3 (SFV-3).</title>
        <authorList>
            <person name="Renne R."/>
            <person name="Friedl E."/>
            <person name="Schweizer M."/>
            <person name="Fleps U."/>
            <person name="Turek R."/>
            <person name="Neumann-Haefelin D."/>
        </authorList>
    </citation>
    <scope>NUCLEOTIDE SEQUENCE [GENOMIC DNA]</scope>
</reference>
<feature type="chain" id="PRO_0000125511" description="Protein Bel-1">
    <location>
        <begin position="1"/>
        <end position="298"/>
    </location>
</feature>
<feature type="DNA-binding region" evidence="2">
    <location>
        <begin position="91"/>
        <end position="200"/>
    </location>
</feature>
<feature type="region of interest" description="Disordered" evidence="3">
    <location>
        <begin position="1"/>
        <end position="46"/>
    </location>
</feature>
<feature type="region of interest" description="Transactivation domain" evidence="2">
    <location>
        <begin position="225"/>
        <end position="298"/>
    </location>
</feature>
<feature type="short sequence motif" description="Nuclear localization signal" evidence="1">
    <location>
        <begin position="214"/>
        <end position="223"/>
    </location>
</feature>
<feature type="compositionally biased region" description="Basic and acidic residues" evidence="3">
    <location>
        <begin position="1"/>
        <end position="17"/>
    </location>
</feature>
<organism>
    <name type="scientific">Simian foamy virus type 3 (strain LK3)</name>
    <name type="common">SFVagm</name>
    <name type="synonym">SFV-3</name>
    <dbReference type="NCBI Taxonomy" id="11644"/>
    <lineage>
        <taxon>Viruses</taxon>
        <taxon>Riboviria</taxon>
        <taxon>Pararnavirae</taxon>
        <taxon>Artverviricota</taxon>
        <taxon>Revtraviricetes</taxon>
        <taxon>Ortervirales</taxon>
        <taxon>Retroviridae</taxon>
        <taxon>Spumaretrovirinae</taxon>
        <taxon>Spumavirus</taxon>
        <taxon>African green monkey simian foamy virus</taxon>
    </lineage>
</organism>
<dbReference type="EMBL" id="M74895">
    <property type="protein sequence ID" value="AAA47799.1"/>
    <property type="status" value="ALT_INIT"/>
    <property type="molecule type" value="Genomic_DNA"/>
</dbReference>
<dbReference type="Proteomes" id="UP000007217">
    <property type="component" value="Segment"/>
</dbReference>
<dbReference type="GO" id="GO:0042025">
    <property type="term" value="C:host cell nucleus"/>
    <property type="evidence" value="ECO:0007669"/>
    <property type="project" value="UniProtKB-SubCell"/>
</dbReference>
<dbReference type="GO" id="GO:0003677">
    <property type="term" value="F:DNA binding"/>
    <property type="evidence" value="ECO:0007669"/>
    <property type="project" value="UniProtKB-KW"/>
</dbReference>
<dbReference type="GO" id="GO:0045893">
    <property type="term" value="P:positive regulation of DNA-templated transcription"/>
    <property type="evidence" value="ECO:0007669"/>
    <property type="project" value="InterPro"/>
</dbReference>
<dbReference type="GO" id="GO:0016032">
    <property type="term" value="P:viral process"/>
    <property type="evidence" value="ECO:0007669"/>
    <property type="project" value="InterPro"/>
</dbReference>
<dbReference type="InterPro" id="IPR004956">
    <property type="entry name" value="Foamy_BEL"/>
</dbReference>
<dbReference type="Pfam" id="PF03274">
    <property type="entry name" value="Foamy_BEL"/>
    <property type="match status" value="1"/>
</dbReference>
<comment type="function">
    <text evidence="1">Transcriptional transactivator that activates the viral internal promoter (IP), thereby enhancing its own expression. This transactivation is repressed by nuclear factor I. Also transactivates the long terminal repeat (LTR) promoter, thereby inducing structural gene expression, initiating the late phase of infection. It is therefore a key regulator of viral gene expression. It directly binds to and activates DNA target sites of viral promoters and those of distinct cellular genes. Required for viral replication (By similarity).</text>
</comment>
<comment type="subunit">
    <text evidence="1">Homodimer or homomultimer. Forms complexes with the host nuclear factors NFIA, NFIB, NFIC or NFIX (By similarity).</text>
</comment>
<comment type="subcellular location">
    <subcellularLocation>
        <location evidence="1">Host nucleus</location>
    </subcellularLocation>
</comment>
<comment type="alternative products">
    <event type="alternative splicing"/>
    <isoform>
        <id>P27402-1</id>
        <name>Bel-1</name>
        <sequence type="displayed"/>
    </isoform>
    <isoform>
        <id>P27402-2</id>
        <name>Bet</name>
        <sequence type="not described"/>
    </isoform>
</comment>
<comment type="sequence caution" evidence="4">
    <conflict type="erroneous initiation">
        <sequence resource="EMBL-CDS" id="AAA47799"/>
    </conflict>
</comment>